<evidence type="ECO:0000255" key="1">
    <source>
        <dbReference type="HAMAP-Rule" id="MF_00210"/>
    </source>
</evidence>
<name>AROA_SACI2</name>
<protein>
    <recommendedName>
        <fullName evidence="1">3-phosphoshikimate 1-carboxyvinyltransferase</fullName>
        <ecNumber evidence="1">2.5.1.19</ecNumber>
    </recommendedName>
    <alternativeName>
        <fullName evidence="1">5-enolpyruvylshikimate-3-phosphate synthase</fullName>
        <shortName evidence="1">EPSP synthase</shortName>
        <shortName evidence="1">EPSPS</shortName>
    </alternativeName>
</protein>
<comment type="function">
    <text evidence="1">Catalyzes the transfer of the enolpyruvyl moiety of phosphoenolpyruvate (PEP) to the 5-hydroxyl of shikimate-3-phosphate (S3P) to produce enolpyruvyl shikimate-3-phosphate and inorganic phosphate.</text>
</comment>
<comment type="catalytic activity">
    <reaction evidence="1">
        <text>3-phosphoshikimate + phosphoenolpyruvate = 5-O-(1-carboxyvinyl)-3-phosphoshikimate + phosphate</text>
        <dbReference type="Rhea" id="RHEA:21256"/>
        <dbReference type="ChEBI" id="CHEBI:43474"/>
        <dbReference type="ChEBI" id="CHEBI:57701"/>
        <dbReference type="ChEBI" id="CHEBI:58702"/>
        <dbReference type="ChEBI" id="CHEBI:145989"/>
        <dbReference type="EC" id="2.5.1.19"/>
    </reaction>
    <physiologicalReaction direction="left-to-right" evidence="1">
        <dbReference type="Rhea" id="RHEA:21257"/>
    </physiologicalReaction>
</comment>
<comment type="pathway">
    <text evidence="1">Metabolic intermediate biosynthesis; chorismate biosynthesis.</text>
</comment>
<comment type="subunit">
    <text evidence="1">Monomer.</text>
</comment>
<comment type="subcellular location">
    <subcellularLocation>
        <location evidence="1">Cytoplasm</location>
    </subcellularLocation>
</comment>
<comment type="similarity">
    <text evidence="1">Belongs to the EPSP synthase family.</text>
</comment>
<organism>
    <name type="scientific">Saccharolobus islandicus (strain L.S.2.15 / Lassen #1)</name>
    <name type="common">Sulfolobus islandicus</name>
    <dbReference type="NCBI Taxonomy" id="429572"/>
    <lineage>
        <taxon>Archaea</taxon>
        <taxon>Thermoproteota</taxon>
        <taxon>Thermoprotei</taxon>
        <taxon>Sulfolobales</taxon>
        <taxon>Sulfolobaceae</taxon>
        <taxon>Saccharolobus</taxon>
    </lineage>
</organism>
<feature type="chain" id="PRO_1000204173" description="3-phosphoshikimate 1-carboxyvinyltransferase">
    <location>
        <begin position="1"/>
        <end position="414"/>
    </location>
</feature>
<feature type="active site" description="Proton acceptor" evidence="1">
    <location>
        <position position="296"/>
    </location>
</feature>
<feature type="binding site" evidence="1">
    <location>
        <position position="20"/>
    </location>
    <ligand>
        <name>3-phosphoshikimate</name>
        <dbReference type="ChEBI" id="CHEBI:145989"/>
    </ligand>
</feature>
<feature type="binding site" evidence="1">
    <location>
        <position position="20"/>
    </location>
    <ligand>
        <name>phosphoenolpyruvate</name>
        <dbReference type="ChEBI" id="CHEBI:58702"/>
    </ligand>
</feature>
<feature type="binding site" evidence="1">
    <location>
        <position position="21"/>
    </location>
    <ligand>
        <name>3-phosphoshikimate</name>
        <dbReference type="ChEBI" id="CHEBI:145989"/>
    </ligand>
</feature>
<feature type="binding site" evidence="1">
    <location>
        <position position="25"/>
    </location>
    <ligand>
        <name>3-phosphoshikimate</name>
        <dbReference type="ChEBI" id="CHEBI:145989"/>
    </ligand>
</feature>
<feature type="binding site" evidence="1">
    <location>
        <position position="85"/>
    </location>
    <ligand>
        <name>phosphoenolpyruvate</name>
        <dbReference type="ChEBI" id="CHEBI:58702"/>
    </ligand>
</feature>
<feature type="binding site" evidence="1">
    <location>
        <position position="113"/>
    </location>
    <ligand>
        <name>phosphoenolpyruvate</name>
        <dbReference type="ChEBI" id="CHEBI:58702"/>
    </ligand>
</feature>
<feature type="binding site" evidence="1">
    <location>
        <position position="154"/>
    </location>
    <ligand>
        <name>3-phosphoshikimate</name>
        <dbReference type="ChEBI" id="CHEBI:145989"/>
    </ligand>
</feature>
<feature type="binding site" evidence="1">
    <location>
        <position position="155"/>
    </location>
    <ligand>
        <name>3-phosphoshikimate</name>
        <dbReference type="ChEBI" id="CHEBI:145989"/>
    </ligand>
</feature>
<feature type="binding site" evidence="1">
    <location>
        <position position="156"/>
    </location>
    <ligand>
        <name>3-phosphoshikimate</name>
        <dbReference type="ChEBI" id="CHEBI:145989"/>
    </ligand>
</feature>
<feature type="binding site" evidence="1">
    <location>
        <position position="156"/>
    </location>
    <ligand>
        <name>phosphoenolpyruvate</name>
        <dbReference type="ChEBI" id="CHEBI:58702"/>
    </ligand>
</feature>
<feature type="binding site" evidence="1">
    <location>
        <position position="181"/>
    </location>
    <ligand>
        <name>3-phosphoshikimate</name>
        <dbReference type="ChEBI" id="CHEBI:145989"/>
    </ligand>
</feature>
<feature type="binding site" evidence="1">
    <location>
        <position position="296"/>
    </location>
    <ligand>
        <name>3-phosphoshikimate</name>
        <dbReference type="ChEBI" id="CHEBI:145989"/>
    </ligand>
</feature>
<feature type="binding site" evidence="1">
    <location>
        <position position="323"/>
    </location>
    <ligand>
        <name>3-phosphoshikimate</name>
        <dbReference type="ChEBI" id="CHEBI:145989"/>
    </ligand>
</feature>
<feature type="binding site" evidence="1">
    <location>
        <position position="327"/>
    </location>
    <ligand>
        <name>phosphoenolpyruvate</name>
        <dbReference type="ChEBI" id="CHEBI:58702"/>
    </ligand>
</feature>
<feature type="binding site" evidence="1">
    <location>
        <position position="371"/>
    </location>
    <ligand>
        <name>phosphoenolpyruvate</name>
        <dbReference type="ChEBI" id="CHEBI:58702"/>
    </ligand>
</feature>
<feature type="binding site" evidence="1">
    <location>
        <position position="395"/>
    </location>
    <ligand>
        <name>phosphoenolpyruvate</name>
        <dbReference type="ChEBI" id="CHEBI:58702"/>
    </ligand>
</feature>
<dbReference type="EC" id="2.5.1.19" evidence="1"/>
<dbReference type="EMBL" id="CP001399">
    <property type="protein sequence ID" value="ACP35928.1"/>
    <property type="molecule type" value="Genomic_DNA"/>
</dbReference>
<dbReference type="RefSeq" id="WP_012713987.1">
    <property type="nucleotide sequence ID" value="NC_012589.1"/>
</dbReference>
<dbReference type="SMR" id="C3MRB5"/>
<dbReference type="GeneID" id="7807314"/>
<dbReference type="GeneID" id="7809627"/>
<dbReference type="KEGG" id="sis:LS215_1933"/>
<dbReference type="HOGENOM" id="CLU_024321_0_0_2"/>
<dbReference type="OrthoDB" id="43788at2157"/>
<dbReference type="UniPathway" id="UPA00053"/>
<dbReference type="Proteomes" id="UP000001747">
    <property type="component" value="Chromosome"/>
</dbReference>
<dbReference type="GO" id="GO:0005737">
    <property type="term" value="C:cytoplasm"/>
    <property type="evidence" value="ECO:0007669"/>
    <property type="project" value="UniProtKB-SubCell"/>
</dbReference>
<dbReference type="GO" id="GO:0003866">
    <property type="term" value="F:3-phosphoshikimate 1-carboxyvinyltransferase activity"/>
    <property type="evidence" value="ECO:0007669"/>
    <property type="project" value="UniProtKB-UniRule"/>
</dbReference>
<dbReference type="GO" id="GO:0008652">
    <property type="term" value="P:amino acid biosynthetic process"/>
    <property type="evidence" value="ECO:0007669"/>
    <property type="project" value="UniProtKB-KW"/>
</dbReference>
<dbReference type="GO" id="GO:0009073">
    <property type="term" value="P:aromatic amino acid family biosynthetic process"/>
    <property type="evidence" value="ECO:0007669"/>
    <property type="project" value="UniProtKB-KW"/>
</dbReference>
<dbReference type="GO" id="GO:0009423">
    <property type="term" value="P:chorismate biosynthetic process"/>
    <property type="evidence" value="ECO:0007669"/>
    <property type="project" value="UniProtKB-UniRule"/>
</dbReference>
<dbReference type="CDD" id="cd01556">
    <property type="entry name" value="EPSP_synthase"/>
    <property type="match status" value="1"/>
</dbReference>
<dbReference type="FunFam" id="3.65.10.10:FF:000015">
    <property type="entry name" value="3-phosphoshikimate 1-carboxyvinyltransferase"/>
    <property type="match status" value="1"/>
</dbReference>
<dbReference type="Gene3D" id="3.65.10.10">
    <property type="entry name" value="Enolpyruvate transferase domain"/>
    <property type="match status" value="2"/>
</dbReference>
<dbReference type="HAMAP" id="MF_00210">
    <property type="entry name" value="EPSP_synth"/>
    <property type="match status" value="1"/>
</dbReference>
<dbReference type="InterPro" id="IPR001986">
    <property type="entry name" value="Enolpyruvate_Tfrase_dom"/>
</dbReference>
<dbReference type="InterPro" id="IPR036968">
    <property type="entry name" value="Enolpyruvate_Tfrase_sf"/>
</dbReference>
<dbReference type="InterPro" id="IPR006264">
    <property type="entry name" value="EPSP_synthase"/>
</dbReference>
<dbReference type="InterPro" id="IPR023193">
    <property type="entry name" value="EPSP_synthase_CS"/>
</dbReference>
<dbReference type="InterPro" id="IPR013792">
    <property type="entry name" value="RNA3'P_cycl/enolpyr_Trfase_a/b"/>
</dbReference>
<dbReference type="NCBIfam" id="TIGR01356">
    <property type="entry name" value="aroA"/>
    <property type="match status" value="1"/>
</dbReference>
<dbReference type="PANTHER" id="PTHR21090">
    <property type="entry name" value="AROM/DEHYDROQUINATE SYNTHASE"/>
    <property type="match status" value="1"/>
</dbReference>
<dbReference type="PANTHER" id="PTHR21090:SF5">
    <property type="entry name" value="PENTAFUNCTIONAL AROM POLYPEPTIDE"/>
    <property type="match status" value="1"/>
</dbReference>
<dbReference type="Pfam" id="PF00275">
    <property type="entry name" value="EPSP_synthase"/>
    <property type="match status" value="1"/>
</dbReference>
<dbReference type="PIRSF" id="PIRSF000505">
    <property type="entry name" value="EPSPS"/>
    <property type="match status" value="1"/>
</dbReference>
<dbReference type="SUPFAM" id="SSF55205">
    <property type="entry name" value="EPT/RTPC-like"/>
    <property type="match status" value="1"/>
</dbReference>
<dbReference type="PROSITE" id="PS00104">
    <property type="entry name" value="EPSP_SYNTHASE_1"/>
    <property type="match status" value="1"/>
</dbReference>
<dbReference type="PROSITE" id="PS00885">
    <property type="entry name" value="EPSP_SYNTHASE_2"/>
    <property type="match status" value="1"/>
</dbReference>
<accession>C3MRB5</accession>
<keyword id="KW-0028">Amino-acid biosynthesis</keyword>
<keyword id="KW-0057">Aromatic amino acid biosynthesis</keyword>
<keyword id="KW-0963">Cytoplasm</keyword>
<keyword id="KW-0808">Transferase</keyword>
<reference key="1">
    <citation type="journal article" date="2009" name="Proc. Natl. Acad. Sci. U.S.A.">
        <title>Biogeography of the Sulfolobus islandicus pan-genome.</title>
        <authorList>
            <person name="Reno M.L."/>
            <person name="Held N.L."/>
            <person name="Fields C.J."/>
            <person name="Burke P.V."/>
            <person name="Whitaker R.J."/>
        </authorList>
    </citation>
    <scope>NUCLEOTIDE SEQUENCE [LARGE SCALE GENOMIC DNA]</scope>
    <source>
        <strain>L.S.2.15 / Lassen #1</strain>
    </source>
</reference>
<sequence length="414" mass="45308">MIVRIYPSEISGTIKAPQSKSLAIRLIFLSLFTRIHLHNLVLSEDVIDAINSVRALGVEVKNNSEFIPPEKLEIKKKFIKLKGSGTTLRMLIPIVAAIGGEVTIDAEESLRRRPLKRIVEALSNYGISFSSSSLPLTITGKLSSYNIKISGDESSQYISGLIYALHILNGGSIEILPPISSKSYILLTVDLFNRFGSNVKFYGNKIHINPNNLVEFQGEVAGDYGLASFYALSALVSGGRTTIVNLWEPKEYFGDHSIVKILKEMGATSEYLDGKWYVEAKDKYSSIKVNIDDAPDLAMTIAGLAAIAEGTSEITGIERLRIKESDRIESIRKVLGLYGVGSEVKSNSILIFGINKRMLSSPITDCLNDHRVAMMSSALALVNGGVITSAECVSKSNPNYWQDLLSLNAKISIE</sequence>
<proteinExistence type="inferred from homology"/>
<gene>
    <name evidence="1" type="primary">aroA</name>
    <name type="ordered locus">LS215_1933</name>
</gene>